<keyword id="KW-0687">Ribonucleoprotein</keyword>
<keyword id="KW-0689">Ribosomal protein</keyword>
<keyword id="KW-0694">RNA-binding</keyword>
<keyword id="KW-0699">rRNA-binding</keyword>
<proteinExistence type="inferred from homology"/>
<gene>
    <name evidence="1" type="primary">rpsE</name>
    <name type="ordered locus">SAS2124</name>
</gene>
<name>RS5_STAAS</name>
<evidence type="ECO:0000255" key="1">
    <source>
        <dbReference type="HAMAP-Rule" id="MF_01307"/>
    </source>
</evidence>
<evidence type="ECO:0000305" key="2"/>
<sequence length="166" mass="17742">MARREEETKEFEERVVTINRVAKVVKGGRRFRFTALVVVGDKNGRVGFGTGKAQEVPEAIKKAVEAAKKDLVVVPRVEGTTPHTITGRYGSGSVFMKPAAPGTGVIAGGPVRAVLELAGITDILSKSLGSNTPINMVRATIDGLQNLKNAEDVAKLRGKTVEELYN</sequence>
<organism>
    <name type="scientific">Staphylococcus aureus (strain MSSA476)</name>
    <dbReference type="NCBI Taxonomy" id="282459"/>
    <lineage>
        <taxon>Bacteria</taxon>
        <taxon>Bacillati</taxon>
        <taxon>Bacillota</taxon>
        <taxon>Bacilli</taxon>
        <taxon>Bacillales</taxon>
        <taxon>Staphylococcaceae</taxon>
        <taxon>Staphylococcus</taxon>
    </lineage>
</organism>
<dbReference type="EMBL" id="BX571857">
    <property type="protein sequence ID" value="CAG43935.1"/>
    <property type="molecule type" value="Genomic_DNA"/>
</dbReference>
<dbReference type="RefSeq" id="WP_000113851.1">
    <property type="nucleotide sequence ID" value="NC_002953.3"/>
</dbReference>
<dbReference type="SMR" id="Q6G788"/>
<dbReference type="KEGG" id="sas:SAS2124"/>
<dbReference type="HOGENOM" id="CLU_065898_2_2_9"/>
<dbReference type="GO" id="GO:0015935">
    <property type="term" value="C:small ribosomal subunit"/>
    <property type="evidence" value="ECO:0007669"/>
    <property type="project" value="InterPro"/>
</dbReference>
<dbReference type="GO" id="GO:0019843">
    <property type="term" value="F:rRNA binding"/>
    <property type="evidence" value="ECO:0007669"/>
    <property type="project" value="UniProtKB-UniRule"/>
</dbReference>
<dbReference type="GO" id="GO:0003735">
    <property type="term" value="F:structural constituent of ribosome"/>
    <property type="evidence" value="ECO:0007669"/>
    <property type="project" value="InterPro"/>
</dbReference>
<dbReference type="GO" id="GO:0006412">
    <property type="term" value="P:translation"/>
    <property type="evidence" value="ECO:0007669"/>
    <property type="project" value="UniProtKB-UniRule"/>
</dbReference>
<dbReference type="FunFam" id="3.30.160.20:FF:000001">
    <property type="entry name" value="30S ribosomal protein S5"/>
    <property type="match status" value="1"/>
</dbReference>
<dbReference type="FunFam" id="3.30.230.10:FF:000002">
    <property type="entry name" value="30S ribosomal protein S5"/>
    <property type="match status" value="1"/>
</dbReference>
<dbReference type="Gene3D" id="3.30.160.20">
    <property type="match status" value="1"/>
</dbReference>
<dbReference type="Gene3D" id="3.30.230.10">
    <property type="match status" value="1"/>
</dbReference>
<dbReference type="HAMAP" id="MF_01307_B">
    <property type="entry name" value="Ribosomal_uS5_B"/>
    <property type="match status" value="1"/>
</dbReference>
<dbReference type="InterPro" id="IPR020568">
    <property type="entry name" value="Ribosomal_Su5_D2-typ_SF"/>
</dbReference>
<dbReference type="InterPro" id="IPR000851">
    <property type="entry name" value="Ribosomal_uS5"/>
</dbReference>
<dbReference type="InterPro" id="IPR005712">
    <property type="entry name" value="Ribosomal_uS5_bac-type"/>
</dbReference>
<dbReference type="InterPro" id="IPR005324">
    <property type="entry name" value="Ribosomal_uS5_C"/>
</dbReference>
<dbReference type="InterPro" id="IPR013810">
    <property type="entry name" value="Ribosomal_uS5_N"/>
</dbReference>
<dbReference type="InterPro" id="IPR018192">
    <property type="entry name" value="Ribosomal_uS5_N_CS"/>
</dbReference>
<dbReference type="InterPro" id="IPR014721">
    <property type="entry name" value="Ribsml_uS5_D2-typ_fold_subgr"/>
</dbReference>
<dbReference type="NCBIfam" id="TIGR01021">
    <property type="entry name" value="rpsE_bact"/>
    <property type="match status" value="1"/>
</dbReference>
<dbReference type="PANTHER" id="PTHR48277">
    <property type="entry name" value="MITOCHONDRIAL RIBOSOMAL PROTEIN S5"/>
    <property type="match status" value="1"/>
</dbReference>
<dbReference type="PANTHER" id="PTHR48277:SF1">
    <property type="entry name" value="MITOCHONDRIAL RIBOSOMAL PROTEIN S5"/>
    <property type="match status" value="1"/>
</dbReference>
<dbReference type="Pfam" id="PF00333">
    <property type="entry name" value="Ribosomal_S5"/>
    <property type="match status" value="1"/>
</dbReference>
<dbReference type="Pfam" id="PF03719">
    <property type="entry name" value="Ribosomal_S5_C"/>
    <property type="match status" value="1"/>
</dbReference>
<dbReference type="SUPFAM" id="SSF54768">
    <property type="entry name" value="dsRNA-binding domain-like"/>
    <property type="match status" value="1"/>
</dbReference>
<dbReference type="SUPFAM" id="SSF54211">
    <property type="entry name" value="Ribosomal protein S5 domain 2-like"/>
    <property type="match status" value="1"/>
</dbReference>
<dbReference type="PROSITE" id="PS00585">
    <property type="entry name" value="RIBOSOMAL_S5"/>
    <property type="match status" value="1"/>
</dbReference>
<dbReference type="PROSITE" id="PS50881">
    <property type="entry name" value="S5_DSRBD"/>
    <property type="match status" value="1"/>
</dbReference>
<comment type="function">
    <text evidence="1">With S4 and S12 plays an important role in translational accuracy.</text>
</comment>
<comment type="function">
    <text evidence="1">Located at the back of the 30S subunit body where it stabilizes the conformation of the head with respect to the body.</text>
</comment>
<comment type="subunit">
    <text evidence="1">Part of the 30S ribosomal subunit. Contacts proteins S4 and S8.</text>
</comment>
<comment type="domain">
    <text>The N-terminal domain interacts with the head of the 30S subunit; the C-terminal domain interacts with the body and contacts protein S4. The interaction surface between S4 and S5 is involved in control of translational fidelity.</text>
</comment>
<comment type="similarity">
    <text evidence="1">Belongs to the universal ribosomal protein uS5 family.</text>
</comment>
<reference key="1">
    <citation type="journal article" date="2004" name="Proc. Natl. Acad. Sci. U.S.A.">
        <title>Complete genomes of two clinical Staphylococcus aureus strains: evidence for the rapid evolution of virulence and drug resistance.</title>
        <authorList>
            <person name="Holden M.T.G."/>
            <person name="Feil E.J."/>
            <person name="Lindsay J.A."/>
            <person name="Peacock S.J."/>
            <person name="Day N.P.J."/>
            <person name="Enright M.C."/>
            <person name="Foster T.J."/>
            <person name="Moore C.E."/>
            <person name="Hurst L."/>
            <person name="Atkin R."/>
            <person name="Barron A."/>
            <person name="Bason N."/>
            <person name="Bentley S.D."/>
            <person name="Chillingworth C."/>
            <person name="Chillingworth T."/>
            <person name="Churcher C."/>
            <person name="Clark L."/>
            <person name="Corton C."/>
            <person name="Cronin A."/>
            <person name="Doggett J."/>
            <person name="Dowd L."/>
            <person name="Feltwell T."/>
            <person name="Hance Z."/>
            <person name="Harris B."/>
            <person name="Hauser H."/>
            <person name="Holroyd S."/>
            <person name="Jagels K."/>
            <person name="James K.D."/>
            <person name="Lennard N."/>
            <person name="Line A."/>
            <person name="Mayes R."/>
            <person name="Moule S."/>
            <person name="Mungall K."/>
            <person name="Ormond D."/>
            <person name="Quail M.A."/>
            <person name="Rabbinowitsch E."/>
            <person name="Rutherford K.M."/>
            <person name="Sanders M."/>
            <person name="Sharp S."/>
            <person name="Simmonds M."/>
            <person name="Stevens K."/>
            <person name="Whitehead S."/>
            <person name="Barrell B.G."/>
            <person name="Spratt B.G."/>
            <person name="Parkhill J."/>
        </authorList>
    </citation>
    <scope>NUCLEOTIDE SEQUENCE [LARGE SCALE GENOMIC DNA]</scope>
    <source>
        <strain>MSSA476</strain>
    </source>
</reference>
<protein>
    <recommendedName>
        <fullName evidence="1">Small ribosomal subunit protein uS5</fullName>
    </recommendedName>
    <alternativeName>
        <fullName evidence="2">30S ribosomal protein S5</fullName>
    </alternativeName>
</protein>
<accession>Q6G788</accession>
<feature type="chain" id="PRO_0000131597" description="Small ribosomal subunit protein uS5">
    <location>
        <begin position="1"/>
        <end position="166"/>
    </location>
</feature>
<feature type="domain" description="S5 DRBM" evidence="1">
    <location>
        <begin position="11"/>
        <end position="74"/>
    </location>
</feature>